<accession>B0U5P7</accession>
<feature type="chain" id="PRO_1000121712" description="Large ribosomal subunit protein bL28">
    <location>
        <begin position="1"/>
        <end position="78"/>
    </location>
</feature>
<name>RL28_XYLFM</name>
<sequence>MSRVCQVTGKRVQTGNNVSHANNKTRRRFLPNLHKRRFWVASENRWVKLRVSTCAVRTIDKNGIDAVLAELRASGEKV</sequence>
<comment type="similarity">
    <text evidence="1">Belongs to the bacterial ribosomal protein bL28 family.</text>
</comment>
<proteinExistence type="inferred from homology"/>
<organism>
    <name type="scientific">Xylella fastidiosa (strain M12)</name>
    <dbReference type="NCBI Taxonomy" id="405440"/>
    <lineage>
        <taxon>Bacteria</taxon>
        <taxon>Pseudomonadati</taxon>
        <taxon>Pseudomonadota</taxon>
        <taxon>Gammaproteobacteria</taxon>
        <taxon>Lysobacterales</taxon>
        <taxon>Lysobacteraceae</taxon>
        <taxon>Xylella</taxon>
    </lineage>
</organism>
<dbReference type="EMBL" id="CP000941">
    <property type="protein sequence ID" value="ACA11551.1"/>
    <property type="molecule type" value="Genomic_DNA"/>
</dbReference>
<dbReference type="RefSeq" id="WP_004086565.1">
    <property type="nucleotide sequence ID" value="NC_010513.1"/>
</dbReference>
<dbReference type="SMR" id="B0U5P7"/>
<dbReference type="GeneID" id="93904190"/>
<dbReference type="KEGG" id="xfm:Xfasm12_0546"/>
<dbReference type="HOGENOM" id="CLU_064548_3_1_6"/>
<dbReference type="GO" id="GO:0022625">
    <property type="term" value="C:cytosolic large ribosomal subunit"/>
    <property type="evidence" value="ECO:0007669"/>
    <property type="project" value="TreeGrafter"/>
</dbReference>
<dbReference type="GO" id="GO:0003735">
    <property type="term" value="F:structural constituent of ribosome"/>
    <property type="evidence" value="ECO:0007669"/>
    <property type="project" value="InterPro"/>
</dbReference>
<dbReference type="GO" id="GO:0006412">
    <property type="term" value="P:translation"/>
    <property type="evidence" value="ECO:0007669"/>
    <property type="project" value="UniProtKB-UniRule"/>
</dbReference>
<dbReference type="FunFam" id="2.30.170.40:FF:000001">
    <property type="entry name" value="50S ribosomal protein L28"/>
    <property type="match status" value="1"/>
</dbReference>
<dbReference type="Gene3D" id="2.30.170.40">
    <property type="entry name" value="Ribosomal protein L28/L24"/>
    <property type="match status" value="1"/>
</dbReference>
<dbReference type="HAMAP" id="MF_00373">
    <property type="entry name" value="Ribosomal_bL28"/>
    <property type="match status" value="1"/>
</dbReference>
<dbReference type="InterPro" id="IPR026569">
    <property type="entry name" value="Ribosomal_bL28"/>
</dbReference>
<dbReference type="InterPro" id="IPR034704">
    <property type="entry name" value="Ribosomal_bL28/bL31-like_sf"/>
</dbReference>
<dbReference type="InterPro" id="IPR001383">
    <property type="entry name" value="Ribosomal_bL28_bact-type"/>
</dbReference>
<dbReference type="InterPro" id="IPR037147">
    <property type="entry name" value="Ribosomal_bL28_sf"/>
</dbReference>
<dbReference type="NCBIfam" id="TIGR00009">
    <property type="entry name" value="L28"/>
    <property type="match status" value="1"/>
</dbReference>
<dbReference type="PANTHER" id="PTHR13528">
    <property type="entry name" value="39S RIBOSOMAL PROTEIN L28, MITOCHONDRIAL"/>
    <property type="match status" value="1"/>
</dbReference>
<dbReference type="PANTHER" id="PTHR13528:SF2">
    <property type="entry name" value="LARGE RIBOSOMAL SUBUNIT PROTEIN BL28M"/>
    <property type="match status" value="1"/>
</dbReference>
<dbReference type="Pfam" id="PF00830">
    <property type="entry name" value="Ribosomal_L28"/>
    <property type="match status" value="1"/>
</dbReference>
<dbReference type="SUPFAM" id="SSF143800">
    <property type="entry name" value="L28p-like"/>
    <property type="match status" value="1"/>
</dbReference>
<gene>
    <name evidence="1" type="primary">rpmB</name>
    <name type="ordered locus">Xfasm12_0546</name>
</gene>
<protein>
    <recommendedName>
        <fullName evidence="1">Large ribosomal subunit protein bL28</fullName>
    </recommendedName>
    <alternativeName>
        <fullName evidence="2">50S ribosomal protein L28</fullName>
    </alternativeName>
</protein>
<evidence type="ECO:0000255" key="1">
    <source>
        <dbReference type="HAMAP-Rule" id="MF_00373"/>
    </source>
</evidence>
<evidence type="ECO:0000305" key="2"/>
<keyword id="KW-0687">Ribonucleoprotein</keyword>
<keyword id="KW-0689">Ribosomal protein</keyword>
<reference key="1">
    <citation type="journal article" date="2010" name="J. Bacteriol.">
        <title>Whole genome sequences of two Xylella fastidiosa strains (M12 and M23) causing almond leaf scorch disease in California.</title>
        <authorList>
            <person name="Chen J."/>
            <person name="Xie G."/>
            <person name="Han S."/>
            <person name="Chertkov O."/>
            <person name="Sims D."/>
            <person name="Civerolo E.L."/>
        </authorList>
    </citation>
    <scope>NUCLEOTIDE SEQUENCE [LARGE SCALE GENOMIC DNA]</scope>
    <source>
        <strain>M12</strain>
    </source>
</reference>